<proteinExistence type="evidence at transcript level"/>
<sequence>MNVFRLSGDLSHLAAIIILLLKIWKSRSCAGISGKSQLLFALVFTTRYLDLLTSFISLYNTSMKVIYIGCAYATVYLIYMKFKATYDGNHDTFRVEFLVVPVGGLSVLVNHDFSPLEILWTFSIYLESVAILPQLFMISKTGEAETITTHYLFFLGLYRALYLFNWIWRYSFEGFFDLIAIVAGVVQTILYCDFFYLYVTKVLKGKKLSLPA</sequence>
<comment type="function">
    <text evidence="2 3">Receptor for the C-terminal sequence motif K-D-E-L that is present on endoplasmic reticulum resident proteins and that mediates their recycling from the Golgi back to the endoplasmic reticulum (By similarity). Binding is pH dependent, and is optimal at pH 5-5.4 (By similarity).</text>
</comment>
<comment type="subcellular location">
    <subcellularLocation>
        <location evidence="2">Endoplasmic reticulum membrane</location>
        <topology evidence="3">Multi-pass membrane protein</topology>
    </subcellularLocation>
    <subcellularLocation>
        <location evidence="2">Golgi apparatus membrane</location>
        <topology evidence="3">Multi-pass membrane protein</topology>
    </subcellularLocation>
    <subcellularLocation>
        <location evidence="2">Cytoplasmic vesicle</location>
        <location evidence="2">COPI-coated vesicle membrane</location>
        <topology evidence="3">Multi-pass membrane protein</topology>
    </subcellularLocation>
    <text evidence="2">Localized in the Golgi in the absence of bound proteins with the sequence motif K-D-E-L. Trafficks back to the endoplasmic reticulum together with cargo proteins containing the sequence motif K-D-E-L.</text>
</comment>
<comment type="domain">
    <text evidence="1 3">Binds the C-terminal sequence motif K-D-E-L in a hydrophilic cavity between the transmembrane domains. This triggers a conformation change that exposes a Lys-rich patch on the cytosolic surface of the protein (By similarity). This patch mediates recycling from the Golgi to the endoplasmic reticulum, probably via COPI vesicles (By similarity).</text>
</comment>
<comment type="similarity">
    <text evidence="4">Belongs to the ERD2 family.</text>
</comment>
<organism>
    <name type="scientific">Xenopus tropicalis</name>
    <name type="common">Western clawed frog</name>
    <name type="synonym">Silurana tropicalis</name>
    <dbReference type="NCBI Taxonomy" id="8364"/>
    <lineage>
        <taxon>Eukaryota</taxon>
        <taxon>Metazoa</taxon>
        <taxon>Chordata</taxon>
        <taxon>Craniata</taxon>
        <taxon>Vertebrata</taxon>
        <taxon>Euteleostomi</taxon>
        <taxon>Amphibia</taxon>
        <taxon>Batrachia</taxon>
        <taxon>Anura</taxon>
        <taxon>Pipoidea</taxon>
        <taxon>Pipidae</taxon>
        <taxon>Xenopodinae</taxon>
        <taxon>Xenopus</taxon>
        <taxon>Silurana</taxon>
    </lineage>
</organism>
<gene>
    <name type="primary">kdelr2</name>
</gene>
<accession>Q6P257</accession>
<keyword id="KW-0968">Cytoplasmic vesicle</keyword>
<keyword id="KW-0256">Endoplasmic reticulum</keyword>
<keyword id="KW-0931">ER-Golgi transport</keyword>
<keyword id="KW-0333">Golgi apparatus</keyword>
<keyword id="KW-0472">Membrane</keyword>
<keyword id="KW-0653">Protein transport</keyword>
<keyword id="KW-0675">Receptor</keyword>
<keyword id="KW-1185">Reference proteome</keyword>
<keyword id="KW-0812">Transmembrane</keyword>
<keyword id="KW-1133">Transmembrane helix</keyword>
<keyword id="KW-0813">Transport</keyword>
<feature type="chain" id="PRO_0000252351" description="ER lumen protein-retaining receptor 2">
    <location>
        <begin position="1"/>
        <end position="212"/>
    </location>
</feature>
<feature type="topological domain" description="Lumenal" evidence="4">
    <location>
        <begin position="1"/>
        <end position="4"/>
    </location>
</feature>
<feature type="transmembrane region" description="Helical" evidence="3">
    <location>
        <begin position="5"/>
        <end position="24"/>
    </location>
</feature>
<feature type="topological domain" description="Cytoplasmic" evidence="4">
    <location>
        <begin position="25"/>
        <end position="32"/>
    </location>
</feature>
<feature type="transmembrane region" description="Helical" evidence="3">
    <location>
        <begin position="33"/>
        <end position="52"/>
    </location>
</feature>
<feature type="topological domain" description="Lumenal" evidence="4">
    <location>
        <begin position="53"/>
        <end position="58"/>
    </location>
</feature>
<feature type="transmembrane region" description="Helical" evidence="3">
    <location>
        <begin position="59"/>
        <end position="79"/>
    </location>
</feature>
<feature type="topological domain" description="Cytoplasmic" evidence="4">
    <location>
        <begin position="80"/>
        <end position="92"/>
    </location>
</feature>
<feature type="transmembrane region" description="Helical" evidence="3">
    <location>
        <begin position="93"/>
        <end position="110"/>
    </location>
</feature>
<feature type="topological domain" description="Lumenal" evidence="4">
    <location>
        <begin position="111"/>
        <end position="116"/>
    </location>
</feature>
<feature type="transmembrane region" description="Helical" evidence="3">
    <location>
        <begin position="117"/>
        <end position="135"/>
    </location>
</feature>
<feature type="topological domain" description="Cytoplasmic" evidence="4">
    <location>
        <begin position="136"/>
        <end position="149"/>
    </location>
</feature>
<feature type="transmembrane region" description="Helical" evidence="3">
    <location>
        <begin position="150"/>
        <end position="168"/>
    </location>
</feature>
<feature type="topological domain" description="Lumenal" evidence="4">
    <location>
        <begin position="169"/>
        <end position="178"/>
    </location>
</feature>
<feature type="transmembrane region" description="Helical" evidence="3">
    <location>
        <begin position="179"/>
        <end position="199"/>
    </location>
</feature>
<feature type="topological domain" description="Cytoplasmic" evidence="4">
    <location>
        <begin position="200"/>
        <end position="212"/>
    </location>
</feature>
<feature type="region of interest" description="Interaction with the K-D-E-L motif on target proteins" evidence="3">
    <location>
        <begin position="47"/>
        <end position="48"/>
    </location>
</feature>
<feature type="region of interest" description="Interaction with the K-D-E-L motif on target proteins" evidence="3">
    <location>
        <begin position="159"/>
        <end position="169"/>
    </location>
</feature>
<feature type="region of interest" description="Important for recycling of cargo proteins with the sequence motif K-D-E-L from the Golgi to the endoplasmic reticulum" evidence="1">
    <location>
        <begin position="204"/>
        <end position="207"/>
    </location>
</feature>
<feature type="site" description="Interaction with the K-D-E-L motif on target proteins" evidence="3">
    <location>
        <position position="5"/>
    </location>
</feature>
<feature type="site" description="Interaction with the K-D-E-L motif on target proteins" evidence="3">
    <location>
        <position position="54"/>
    </location>
</feature>
<feature type="site" description="Interaction with the K-D-E-L motif on target proteins" evidence="3">
    <location>
        <position position="117"/>
    </location>
</feature>
<feature type="site" description="Important for recycling of cargo proteins with the sequence motif K-D-E-L from the Golgi to the endoplasmic reticulum" evidence="1">
    <location>
        <position position="193"/>
    </location>
</feature>
<protein>
    <recommendedName>
        <fullName>ER lumen protein-retaining receptor 2</fullName>
    </recommendedName>
    <alternativeName>
        <fullName>KDEL endoplasmic reticulum protein retention receptor 2</fullName>
        <shortName>KDEL receptor 2</shortName>
    </alternativeName>
</protein>
<reference key="1">
    <citation type="submission" date="2003-12" db="EMBL/GenBank/DDBJ databases">
        <authorList>
            <consortium name="NIH - Xenopus Gene Collection (XGC) project"/>
        </authorList>
    </citation>
    <scope>NUCLEOTIDE SEQUENCE [LARGE SCALE MRNA]</scope>
    <source>
        <tissue>Embryo</tissue>
    </source>
</reference>
<evidence type="ECO:0000250" key="1">
    <source>
        <dbReference type="UniProtKB" id="P24390"/>
    </source>
</evidence>
<evidence type="ECO:0000250" key="2">
    <source>
        <dbReference type="UniProtKB" id="P33947"/>
    </source>
</evidence>
<evidence type="ECO:0000250" key="3">
    <source>
        <dbReference type="UniProtKB" id="Q5ZKX9"/>
    </source>
</evidence>
<evidence type="ECO:0000305" key="4"/>
<dbReference type="EMBL" id="BC064720">
    <property type="protein sequence ID" value="AAH64720.1"/>
    <property type="molecule type" value="mRNA"/>
</dbReference>
<dbReference type="RefSeq" id="NP_989381.1">
    <property type="nucleotide sequence ID" value="NM_204050.1"/>
</dbReference>
<dbReference type="SMR" id="Q6P257"/>
<dbReference type="FunCoup" id="Q6P257">
    <property type="interactions" value="1793"/>
</dbReference>
<dbReference type="STRING" id="8364.ENSXETP00000015574"/>
<dbReference type="PaxDb" id="8364-ENSXETP00000023270"/>
<dbReference type="DNASU" id="395012"/>
<dbReference type="GeneID" id="395012"/>
<dbReference type="KEGG" id="xtr:395012"/>
<dbReference type="AGR" id="Xenbase:XB-GENE-941343"/>
<dbReference type="CTD" id="11014"/>
<dbReference type="Xenbase" id="XB-GENE-941343">
    <property type="gene designation" value="kdelr1"/>
</dbReference>
<dbReference type="eggNOG" id="KOG3106">
    <property type="taxonomic scope" value="Eukaryota"/>
</dbReference>
<dbReference type="HOGENOM" id="CLU_057784_0_0_1"/>
<dbReference type="InParanoid" id="Q6P257"/>
<dbReference type="OMA" id="WKSRSCE"/>
<dbReference type="OrthoDB" id="7694678at2759"/>
<dbReference type="PhylomeDB" id="Q6P257"/>
<dbReference type="TreeFam" id="TF314792"/>
<dbReference type="Reactome" id="R-XTR-6807878">
    <property type="pathway name" value="COPI-mediated anterograde transport"/>
</dbReference>
<dbReference type="Reactome" id="R-XTR-6811434">
    <property type="pathway name" value="COPI-dependent Golgi-to-ER retrograde traffic"/>
</dbReference>
<dbReference type="Proteomes" id="UP000008143">
    <property type="component" value="Chromosome 9"/>
</dbReference>
<dbReference type="Bgee" id="ENSXETG00000027589">
    <property type="expression patterns" value="Expressed in neurula embryo and 15 other cell types or tissues"/>
</dbReference>
<dbReference type="GO" id="GO:0030663">
    <property type="term" value="C:COPI-coated vesicle membrane"/>
    <property type="evidence" value="ECO:0007669"/>
    <property type="project" value="UniProtKB-SubCell"/>
</dbReference>
<dbReference type="GO" id="GO:0005789">
    <property type="term" value="C:endoplasmic reticulum membrane"/>
    <property type="evidence" value="ECO:0000250"/>
    <property type="project" value="UniProtKB"/>
</dbReference>
<dbReference type="GO" id="GO:0000139">
    <property type="term" value="C:Golgi membrane"/>
    <property type="evidence" value="ECO:0000250"/>
    <property type="project" value="UniProtKB"/>
</dbReference>
<dbReference type="GO" id="GO:0016020">
    <property type="term" value="C:membrane"/>
    <property type="evidence" value="ECO:0000250"/>
    <property type="project" value="UniProtKB"/>
</dbReference>
<dbReference type="GO" id="GO:0005046">
    <property type="term" value="F:KDEL sequence binding"/>
    <property type="evidence" value="ECO:0000250"/>
    <property type="project" value="UniProtKB"/>
</dbReference>
<dbReference type="GO" id="GO:0006621">
    <property type="term" value="P:protein retention in ER lumen"/>
    <property type="evidence" value="ECO:0007669"/>
    <property type="project" value="InterPro"/>
</dbReference>
<dbReference type="GO" id="GO:0015031">
    <property type="term" value="P:protein transport"/>
    <property type="evidence" value="ECO:0007669"/>
    <property type="project" value="UniProtKB-KW"/>
</dbReference>
<dbReference type="GO" id="GO:0006890">
    <property type="term" value="P:retrograde vesicle-mediated transport, Golgi to endoplasmic reticulum"/>
    <property type="evidence" value="ECO:0000250"/>
    <property type="project" value="UniProtKB"/>
</dbReference>
<dbReference type="InterPro" id="IPR000133">
    <property type="entry name" value="ER_ret_rcpt"/>
</dbReference>
<dbReference type="PANTHER" id="PTHR10585">
    <property type="entry name" value="ER LUMEN PROTEIN RETAINING RECEPTOR"/>
    <property type="match status" value="1"/>
</dbReference>
<dbReference type="Pfam" id="PF00810">
    <property type="entry name" value="ER_lumen_recept"/>
    <property type="match status" value="1"/>
</dbReference>
<dbReference type="PRINTS" id="PR00660">
    <property type="entry name" value="ERLUMENR"/>
</dbReference>
<dbReference type="PROSITE" id="PS00951">
    <property type="entry name" value="ER_LUMEN_RECEPTOR_1"/>
    <property type="match status" value="1"/>
</dbReference>
<dbReference type="PROSITE" id="PS00952">
    <property type="entry name" value="ER_LUMEN_RECEPTOR_2"/>
    <property type="match status" value="1"/>
</dbReference>
<name>ERD22_XENTR</name>